<sequence>MPALEITIINKLGLHARAAAKFVGVAGRYPCQVRVGRNPESCVDGKSIMAVMMLAAGKGTNLHLHTEGEQEDEALNALVELINNRFDEGE</sequence>
<proteinExistence type="inferred from homology"/>
<comment type="function">
    <text evidence="1">General (non sugar-specific) component of the phosphoenolpyruvate-dependent sugar phosphotransferase system (sugar PTS). This major carbohydrate active-transport system catalyzes the phosphorylation of incoming sugar substrates concomitantly with their translocation across the cell membrane. The phosphoryl group from phosphoenolpyruvate (PEP) is transferred to the phosphoryl carrier protein HPr by enzyme I. Phospho-HPr then transfers it to the PTS EIIA domain.</text>
</comment>
<comment type="subcellular location">
    <subcellularLocation>
        <location evidence="1">Cytoplasm</location>
    </subcellularLocation>
</comment>
<comment type="similarity">
    <text evidence="3">Belongs to the HPr family.</text>
</comment>
<protein>
    <recommendedName>
        <fullName>Phosphocarrier protein HPr</fullName>
    </recommendedName>
    <alternativeName>
        <fullName>Histidine-containing protein</fullName>
    </alternativeName>
</protein>
<feature type="chain" id="PRO_0000107867" description="Phosphocarrier protein HPr">
    <location>
        <begin position="1"/>
        <end position="90"/>
    </location>
</feature>
<feature type="domain" description="HPr" evidence="2">
    <location>
        <begin position="1"/>
        <end position="89"/>
    </location>
</feature>
<feature type="active site" description="Pros-phosphohistidine intermediate" evidence="2">
    <location>
        <position position="15"/>
    </location>
</feature>
<keyword id="KW-0963">Cytoplasm</keyword>
<keyword id="KW-0598">Phosphotransferase system</keyword>
<keyword id="KW-1185">Reference proteome</keyword>
<keyword id="KW-0762">Sugar transport</keyword>
<keyword id="KW-0813">Transport</keyword>
<organism>
    <name type="scientific">Pseudomonas aeruginosa (strain ATCC 15692 / DSM 22644 / CIP 104116 / JCM 14847 / LMG 12228 / 1C / PRS 101 / PAO1)</name>
    <dbReference type="NCBI Taxonomy" id="208964"/>
    <lineage>
        <taxon>Bacteria</taxon>
        <taxon>Pseudomonadati</taxon>
        <taxon>Pseudomonadota</taxon>
        <taxon>Gammaproteobacteria</taxon>
        <taxon>Pseudomonadales</taxon>
        <taxon>Pseudomonadaceae</taxon>
        <taxon>Pseudomonas</taxon>
    </lineage>
</organism>
<dbReference type="EMBL" id="AE004091">
    <property type="protein sequence ID" value="AAG07854.1"/>
    <property type="molecule type" value="Genomic_DNA"/>
</dbReference>
<dbReference type="PIR" id="B83088">
    <property type="entry name" value="B83088"/>
</dbReference>
<dbReference type="RefSeq" id="NP_253156.1">
    <property type="nucleotide sequence ID" value="NC_002516.2"/>
</dbReference>
<dbReference type="RefSeq" id="WP_003094362.1">
    <property type="nucleotide sequence ID" value="NZ_QZGE01000004.1"/>
</dbReference>
<dbReference type="SMR" id="Q9HVV2"/>
<dbReference type="FunCoup" id="Q9HVV2">
    <property type="interactions" value="23"/>
</dbReference>
<dbReference type="STRING" id="208964.PA4466"/>
<dbReference type="PaxDb" id="208964-PA4466"/>
<dbReference type="GeneID" id="881011"/>
<dbReference type="KEGG" id="pae:PA4466"/>
<dbReference type="PATRIC" id="fig|208964.12.peg.4676"/>
<dbReference type="PseudoCAP" id="PA4466"/>
<dbReference type="HOGENOM" id="CLU_136230_1_1_6"/>
<dbReference type="InParanoid" id="Q9HVV2"/>
<dbReference type="OrthoDB" id="9798965at2"/>
<dbReference type="PhylomeDB" id="Q9HVV2"/>
<dbReference type="BioCyc" id="PAER208964:G1FZ6-4555-MONOMER"/>
<dbReference type="Proteomes" id="UP000002438">
    <property type="component" value="Chromosome"/>
</dbReference>
<dbReference type="GO" id="GO:0005737">
    <property type="term" value="C:cytoplasm"/>
    <property type="evidence" value="ECO:0007669"/>
    <property type="project" value="UniProtKB-SubCell"/>
</dbReference>
<dbReference type="GO" id="GO:0009401">
    <property type="term" value="P:phosphoenolpyruvate-dependent sugar phosphotransferase system"/>
    <property type="evidence" value="ECO:0000318"/>
    <property type="project" value="GO_Central"/>
</dbReference>
<dbReference type="CDD" id="cd00367">
    <property type="entry name" value="PTS-HPr_like"/>
    <property type="match status" value="1"/>
</dbReference>
<dbReference type="Gene3D" id="3.30.1340.10">
    <property type="entry name" value="HPr-like"/>
    <property type="match status" value="1"/>
</dbReference>
<dbReference type="InterPro" id="IPR050399">
    <property type="entry name" value="HPr"/>
</dbReference>
<dbReference type="InterPro" id="IPR000032">
    <property type="entry name" value="HPr-like"/>
</dbReference>
<dbReference type="InterPro" id="IPR035895">
    <property type="entry name" value="HPr-like_sf"/>
</dbReference>
<dbReference type="InterPro" id="IPR001020">
    <property type="entry name" value="PTS_HPr_His_P_site"/>
</dbReference>
<dbReference type="InterPro" id="IPR002114">
    <property type="entry name" value="PTS_HPr_Ser_P_site"/>
</dbReference>
<dbReference type="NCBIfam" id="TIGR01003">
    <property type="entry name" value="PTS_HPr_family"/>
    <property type="match status" value="1"/>
</dbReference>
<dbReference type="PANTHER" id="PTHR33705">
    <property type="entry name" value="PHOSPHOCARRIER PROTEIN HPR"/>
    <property type="match status" value="1"/>
</dbReference>
<dbReference type="PANTHER" id="PTHR33705:SF2">
    <property type="entry name" value="PHOSPHOCARRIER PROTEIN NPR"/>
    <property type="match status" value="1"/>
</dbReference>
<dbReference type="Pfam" id="PF00381">
    <property type="entry name" value="PTS-HPr"/>
    <property type="match status" value="1"/>
</dbReference>
<dbReference type="PRINTS" id="PR00107">
    <property type="entry name" value="PHOSPHOCPHPR"/>
</dbReference>
<dbReference type="SUPFAM" id="SSF55594">
    <property type="entry name" value="HPr-like"/>
    <property type="match status" value="1"/>
</dbReference>
<dbReference type="PROSITE" id="PS51350">
    <property type="entry name" value="PTS_HPR_DOM"/>
    <property type="match status" value="1"/>
</dbReference>
<dbReference type="PROSITE" id="PS00369">
    <property type="entry name" value="PTS_HPR_HIS"/>
    <property type="match status" value="1"/>
</dbReference>
<dbReference type="PROSITE" id="PS00589">
    <property type="entry name" value="PTS_HPR_SER"/>
    <property type="match status" value="1"/>
</dbReference>
<accession>Q9HVV2</accession>
<gene>
    <name type="primary">ptsH</name>
    <name type="ordered locus">PA4466</name>
</gene>
<name>PTHP_PSEAE</name>
<evidence type="ECO:0000250" key="1"/>
<evidence type="ECO:0000255" key="2">
    <source>
        <dbReference type="PROSITE-ProRule" id="PRU00681"/>
    </source>
</evidence>
<evidence type="ECO:0000305" key="3"/>
<reference key="1">
    <citation type="journal article" date="2000" name="Nature">
        <title>Complete genome sequence of Pseudomonas aeruginosa PAO1, an opportunistic pathogen.</title>
        <authorList>
            <person name="Stover C.K."/>
            <person name="Pham X.-Q.T."/>
            <person name="Erwin A.L."/>
            <person name="Mizoguchi S.D."/>
            <person name="Warrener P."/>
            <person name="Hickey M.J."/>
            <person name="Brinkman F.S.L."/>
            <person name="Hufnagle W.O."/>
            <person name="Kowalik D.J."/>
            <person name="Lagrou M."/>
            <person name="Garber R.L."/>
            <person name="Goltry L."/>
            <person name="Tolentino E."/>
            <person name="Westbrock-Wadman S."/>
            <person name="Yuan Y."/>
            <person name="Brody L.L."/>
            <person name="Coulter S.N."/>
            <person name="Folger K.R."/>
            <person name="Kas A."/>
            <person name="Larbig K."/>
            <person name="Lim R.M."/>
            <person name="Smith K.A."/>
            <person name="Spencer D.H."/>
            <person name="Wong G.K.-S."/>
            <person name="Wu Z."/>
            <person name="Paulsen I.T."/>
            <person name="Reizer J."/>
            <person name="Saier M.H. Jr."/>
            <person name="Hancock R.E.W."/>
            <person name="Lory S."/>
            <person name="Olson M.V."/>
        </authorList>
    </citation>
    <scope>NUCLEOTIDE SEQUENCE [LARGE SCALE GENOMIC DNA]</scope>
    <source>
        <strain>ATCC 15692 / DSM 22644 / CIP 104116 / JCM 14847 / LMG 12228 / 1C / PRS 101 / PAO1</strain>
    </source>
</reference>